<evidence type="ECO:0000255" key="1">
    <source>
        <dbReference type="HAMAP-Rule" id="MF_00753"/>
    </source>
</evidence>
<proteinExistence type="inferred from homology"/>
<gene>
    <name evidence="1" type="primary">glpB</name>
    <name type="ordered locus">MS1994</name>
</gene>
<reference key="1">
    <citation type="journal article" date="2004" name="Nat. Biotechnol.">
        <title>The genome sequence of the capnophilic rumen bacterium Mannheimia succiniciproducens.</title>
        <authorList>
            <person name="Hong S.H."/>
            <person name="Kim J.S."/>
            <person name="Lee S.Y."/>
            <person name="In Y.H."/>
            <person name="Choi S.S."/>
            <person name="Rih J.-K."/>
            <person name="Kim C.H."/>
            <person name="Jeong H."/>
            <person name="Hur C.G."/>
            <person name="Kim J.J."/>
        </authorList>
    </citation>
    <scope>NUCLEOTIDE SEQUENCE [LARGE SCALE GENOMIC DNA]</scope>
    <source>
        <strain>KCTC 0769BP / MBEL55E</strain>
    </source>
</reference>
<accession>Q65R09</accession>
<comment type="function">
    <text evidence="1">Conversion of glycerol 3-phosphate to dihydroxyacetone. Uses fumarate or nitrate as electron acceptor.</text>
</comment>
<comment type="catalytic activity">
    <reaction evidence="1">
        <text>a quinone + sn-glycerol 3-phosphate = dihydroxyacetone phosphate + a quinol</text>
        <dbReference type="Rhea" id="RHEA:18977"/>
        <dbReference type="ChEBI" id="CHEBI:24646"/>
        <dbReference type="ChEBI" id="CHEBI:57597"/>
        <dbReference type="ChEBI" id="CHEBI:57642"/>
        <dbReference type="ChEBI" id="CHEBI:132124"/>
        <dbReference type="EC" id="1.1.5.3"/>
    </reaction>
</comment>
<comment type="cofactor">
    <cofactor evidence="1">
        <name>FMN</name>
        <dbReference type="ChEBI" id="CHEBI:58210"/>
    </cofactor>
</comment>
<comment type="pathway">
    <text evidence="1">Polyol metabolism; glycerol degradation via glycerol kinase pathway; glycerone phosphate from sn-glycerol 3-phosphate (anaerobic route): step 1/1.</text>
</comment>
<comment type="subunit">
    <text evidence="1">Composed of a catalytic GlpA/B dimer and of membrane bound GlpC.</text>
</comment>
<comment type="similarity">
    <text evidence="1">Belongs to the anaerobic G-3-P dehydrogenase subunit B family.</text>
</comment>
<name>GLPB_MANSM</name>
<dbReference type="EC" id="1.1.5.3" evidence="1"/>
<dbReference type="EMBL" id="AE016827">
    <property type="protein sequence ID" value="AAU38601.1"/>
    <property type="molecule type" value="Genomic_DNA"/>
</dbReference>
<dbReference type="RefSeq" id="WP_011201152.1">
    <property type="nucleotide sequence ID" value="NC_006300.1"/>
</dbReference>
<dbReference type="STRING" id="221988.MS1994"/>
<dbReference type="KEGG" id="msu:MS1994"/>
<dbReference type="eggNOG" id="COG3075">
    <property type="taxonomic scope" value="Bacteria"/>
</dbReference>
<dbReference type="HOGENOM" id="CLU_047793_0_0_6"/>
<dbReference type="OrthoDB" id="6395323at2"/>
<dbReference type="UniPathway" id="UPA00618">
    <property type="reaction ID" value="UER00673"/>
</dbReference>
<dbReference type="Proteomes" id="UP000000607">
    <property type="component" value="Chromosome"/>
</dbReference>
<dbReference type="GO" id="GO:0009331">
    <property type="term" value="C:glycerol-3-phosphate dehydrogenase (FAD) complex"/>
    <property type="evidence" value="ECO:0007669"/>
    <property type="project" value="InterPro"/>
</dbReference>
<dbReference type="GO" id="GO:0004368">
    <property type="term" value="F:glycerol-3-phosphate dehydrogenase (quinone) activity"/>
    <property type="evidence" value="ECO:0007669"/>
    <property type="project" value="UniProtKB-UniRule"/>
</dbReference>
<dbReference type="GO" id="GO:0019563">
    <property type="term" value="P:glycerol catabolic process"/>
    <property type="evidence" value="ECO:0007669"/>
    <property type="project" value="UniProtKB-UniRule"/>
</dbReference>
<dbReference type="Gene3D" id="3.50.50.60">
    <property type="entry name" value="FAD/NAD(P)-binding domain"/>
    <property type="match status" value="1"/>
</dbReference>
<dbReference type="HAMAP" id="MF_00753">
    <property type="entry name" value="Glycerol3P_GlpB"/>
    <property type="match status" value="1"/>
</dbReference>
<dbReference type="InterPro" id="IPR003953">
    <property type="entry name" value="FAD-dep_OxRdtase_2_FAD-bd"/>
</dbReference>
<dbReference type="InterPro" id="IPR050315">
    <property type="entry name" value="FAD-oxidoreductase_2"/>
</dbReference>
<dbReference type="InterPro" id="IPR036188">
    <property type="entry name" value="FAD/NAD-bd_sf"/>
</dbReference>
<dbReference type="InterPro" id="IPR009158">
    <property type="entry name" value="G3P_DH_GlpB_su"/>
</dbReference>
<dbReference type="NCBIfam" id="TIGR03378">
    <property type="entry name" value="glycerol3P_GlpB"/>
    <property type="match status" value="1"/>
</dbReference>
<dbReference type="NCBIfam" id="NF003718">
    <property type="entry name" value="PRK05329.1-1"/>
    <property type="match status" value="1"/>
</dbReference>
<dbReference type="NCBIfam" id="NF003719">
    <property type="entry name" value="PRK05329.1-2"/>
    <property type="match status" value="1"/>
</dbReference>
<dbReference type="NCBIfam" id="NF003720">
    <property type="entry name" value="PRK05329.1-3"/>
    <property type="match status" value="1"/>
</dbReference>
<dbReference type="NCBIfam" id="NF003721">
    <property type="entry name" value="PRK05329.1-4"/>
    <property type="match status" value="1"/>
</dbReference>
<dbReference type="PANTHER" id="PTHR43400:SF11">
    <property type="entry name" value="ANAEROBIC GLYCEROL-3-PHOSPHATE DEHYDROGENASE SUBUNIT B"/>
    <property type="match status" value="1"/>
</dbReference>
<dbReference type="PANTHER" id="PTHR43400">
    <property type="entry name" value="FUMARATE REDUCTASE"/>
    <property type="match status" value="1"/>
</dbReference>
<dbReference type="Pfam" id="PF00890">
    <property type="entry name" value="FAD_binding_2"/>
    <property type="match status" value="1"/>
</dbReference>
<dbReference type="PIRSF" id="PIRSF000141">
    <property type="entry name" value="Anaerobic_G3P_dh"/>
    <property type="match status" value="1"/>
</dbReference>
<dbReference type="SUPFAM" id="SSF51905">
    <property type="entry name" value="FAD/NAD(P)-binding domain"/>
    <property type="match status" value="1"/>
</dbReference>
<protein>
    <recommendedName>
        <fullName evidence="1">Anaerobic glycerol-3-phosphate dehydrogenase subunit B</fullName>
        <shortName evidence="1">Anaerobic G-3-P dehydrogenase subunit B</shortName>
        <shortName evidence="1">Anaerobic G3Pdhase B</shortName>
        <ecNumber evidence="1">1.1.5.3</ecNumber>
    </recommendedName>
</protein>
<sequence length="431" mass="47213">MNFDVVIIGAGIAGLTCGLTLQEKGVRCAIINNGQAALDFSSGSMDLLSRLPNGSTVDSFAQSYAALAQQSPNHPYVILGKDVVLDKIQQFETLAKSLNLSLVGSSDKNHKRVTALGGLRGTWLSPNSVPTVSLEGKFPHDNIVLLGIEGYHDFQPQLLADNLKQNPQFAHCEITTNFLHIPELDHLRQNSREFRSVNIAQVLEYKLSFNNLVDEIKQAVGNAKAAFLPACFGLDDQSFFESLKQATGIELYELPTLPPSLLGIRQHRQLRHRFEKLGGVMFNGDRALRSEFEGNKVARIFTQLHLENAVTAKYFVLASGGFFSNGLVSEFEEIYEPLFRSDIVKTERFNATDRFSWISKRFADPQPYQSAGVVINAECQVQKDGNNVENLFAIGAVIGGYNGIELGCGSGVAVTTALKVADNIIAKESSN</sequence>
<feature type="chain" id="PRO_0000258903" description="Anaerobic glycerol-3-phosphate dehydrogenase subunit B">
    <location>
        <begin position="1"/>
        <end position="431"/>
    </location>
</feature>
<keyword id="KW-0285">Flavoprotein</keyword>
<keyword id="KW-0288">FMN</keyword>
<keyword id="KW-0560">Oxidoreductase</keyword>
<organism>
    <name type="scientific">Mannheimia succiniciproducens (strain KCTC 0769BP / MBEL55E)</name>
    <dbReference type="NCBI Taxonomy" id="221988"/>
    <lineage>
        <taxon>Bacteria</taxon>
        <taxon>Pseudomonadati</taxon>
        <taxon>Pseudomonadota</taxon>
        <taxon>Gammaproteobacteria</taxon>
        <taxon>Pasteurellales</taxon>
        <taxon>Pasteurellaceae</taxon>
        <taxon>Basfia</taxon>
    </lineage>
</organism>